<sequence length="69" mass="7412">MTMMKAIWPEPSDPESMMEAAIDLFGDEAATAVAHCGLEAWTDGRADDFAFWVDIFRSLTGMPSAGAGN</sequence>
<organism>
    <name type="scientific">Sinorhizobium fredii (strain NBRC 101917 / NGR234)</name>
    <dbReference type="NCBI Taxonomy" id="394"/>
    <lineage>
        <taxon>Bacteria</taxon>
        <taxon>Pseudomonadati</taxon>
        <taxon>Pseudomonadota</taxon>
        <taxon>Alphaproteobacteria</taxon>
        <taxon>Hyphomicrobiales</taxon>
        <taxon>Rhizobiaceae</taxon>
        <taxon>Sinorhizobium/Ensifer group</taxon>
        <taxon>Sinorhizobium</taxon>
    </lineage>
</organism>
<geneLocation type="plasmid">
    <name>sym pNGR234a</name>
</geneLocation>
<dbReference type="EMBL" id="U00090">
    <property type="protein sequence ID" value="AAB91798.1"/>
    <property type="molecule type" value="Genomic_DNA"/>
</dbReference>
<dbReference type="RefSeq" id="NP_444001.1">
    <property type="nucleotide sequence ID" value="NC_000914.2"/>
</dbReference>
<dbReference type="SMR" id="P55590"/>
<dbReference type="KEGG" id="rhi:NGR_a02240"/>
<dbReference type="PATRIC" id="fig|394.7.peg.240"/>
<dbReference type="HOGENOM" id="CLU_2773094_0_0_5"/>
<dbReference type="OrthoDB" id="8088494at2"/>
<dbReference type="Proteomes" id="UP000001054">
    <property type="component" value="Plasmid pNGR234a"/>
</dbReference>
<proteinExistence type="predicted"/>
<feature type="chain" id="PRO_0000200926" description="Uncharacterized protein y4oE">
    <location>
        <begin position="1"/>
        <end position="69"/>
    </location>
</feature>
<gene>
    <name type="ordered locus">NGR_a02240</name>
    <name type="ORF">y4oE</name>
</gene>
<name>Y4OE_SINFN</name>
<accession>P55590</accession>
<protein>
    <recommendedName>
        <fullName>Uncharacterized protein y4oE</fullName>
    </recommendedName>
</protein>
<keyword id="KW-0614">Plasmid</keyword>
<keyword id="KW-1185">Reference proteome</keyword>
<reference key="1">
    <citation type="journal article" date="1997" name="Nature">
        <title>Molecular basis of symbiosis between Rhizobium and legumes.</title>
        <authorList>
            <person name="Freiberg C.A."/>
            <person name="Fellay R."/>
            <person name="Bairoch A."/>
            <person name="Broughton W.J."/>
            <person name="Rosenthal A."/>
            <person name="Perret X."/>
        </authorList>
    </citation>
    <scope>NUCLEOTIDE SEQUENCE [LARGE SCALE GENOMIC DNA]</scope>
    <source>
        <strain>NBRC 101917 / NGR234</strain>
    </source>
</reference>
<reference key="2">
    <citation type="journal article" date="2009" name="Appl. Environ. Microbiol.">
        <title>Rhizobium sp. strain NGR234 possesses a remarkable number of secretion systems.</title>
        <authorList>
            <person name="Schmeisser C."/>
            <person name="Liesegang H."/>
            <person name="Krysciak D."/>
            <person name="Bakkou N."/>
            <person name="Le Quere A."/>
            <person name="Wollherr A."/>
            <person name="Heinemeyer I."/>
            <person name="Morgenstern B."/>
            <person name="Pommerening-Roeser A."/>
            <person name="Flores M."/>
            <person name="Palacios R."/>
            <person name="Brenner S."/>
            <person name="Gottschalk G."/>
            <person name="Schmitz R.A."/>
            <person name="Broughton W.J."/>
            <person name="Perret X."/>
            <person name="Strittmatter A.W."/>
            <person name="Streit W.R."/>
        </authorList>
    </citation>
    <scope>NUCLEOTIDE SEQUENCE [LARGE SCALE GENOMIC DNA]</scope>
    <source>
        <strain>NBRC 101917 / NGR234</strain>
    </source>
</reference>